<comment type="function">
    <text evidence="1">One of the primary rRNA binding proteins, it binds directly near the 3'-end of the 23S rRNA, where it nucleates assembly of the 50S subunit.</text>
</comment>
<comment type="subunit">
    <text evidence="1">Part of the 50S ribosomal subunit. Forms a cluster with proteins L14 and L19.</text>
</comment>
<comment type="similarity">
    <text evidence="1">Belongs to the universal ribosomal protein uL3 family.</text>
</comment>
<accession>A0JZ84</accession>
<gene>
    <name evidence="1" type="primary">rplC</name>
    <name type="ordered locus">Arth_2975</name>
</gene>
<name>RL3_ARTS2</name>
<dbReference type="EMBL" id="CP000454">
    <property type="protein sequence ID" value="ABK04354.1"/>
    <property type="molecule type" value="Genomic_DNA"/>
</dbReference>
<dbReference type="RefSeq" id="WP_011692809.1">
    <property type="nucleotide sequence ID" value="NC_008541.1"/>
</dbReference>
<dbReference type="SMR" id="A0JZ84"/>
<dbReference type="STRING" id="290399.Arth_2975"/>
<dbReference type="KEGG" id="art:Arth_2975"/>
<dbReference type="eggNOG" id="COG0087">
    <property type="taxonomic scope" value="Bacteria"/>
</dbReference>
<dbReference type="HOGENOM" id="CLU_044142_4_1_11"/>
<dbReference type="OrthoDB" id="9806135at2"/>
<dbReference type="Proteomes" id="UP000000754">
    <property type="component" value="Chromosome"/>
</dbReference>
<dbReference type="GO" id="GO:0022625">
    <property type="term" value="C:cytosolic large ribosomal subunit"/>
    <property type="evidence" value="ECO:0007669"/>
    <property type="project" value="TreeGrafter"/>
</dbReference>
<dbReference type="GO" id="GO:0019843">
    <property type="term" value="F:rRNA binding"/>
    <property type="evidence" value="ECO:0007669"/>
    <property type="project" value="UniProtKB-UniRule"/>
</dbReference>
<dbReference type="GO" id="GO:0003735">
    <property type="term" value="F:structural constituent of ribosome"/>
    <property type="evidence" value="ECO:0007669"/>
    <property type="project" value="InterPro"/>
</dbReference>
<dbReference type="GO" id="GO:0006412">
    <property type="term" value="P:translation"/>
    <property type="evidence" value="ECO:0007669"/>
    <property type="project" value="UniProtKB-UniRule"/>
</dbReference>
<dbReference type="FunFam" id="2.40.30.10:FF:000004">
    <property type="entry name" value="50S ribosomal protein L3"/>
    <property type="match status" value="1"/>
</dbReference>
<dbReference type="FunFam" id="3.30.160.810:FF:000001">
    <property type="entry name" value="50S ribosomal protein L3"/>
    <property type="match status" value="1"/>
</dbReference>
<dbReference type="Gene3D" id="3.30.160.810">
    <property type="match status" value="1"/>
</dbReference>
<dbReference type="Gene3D" id="2.40.30.10">
    <property type="entry name" value="Translation factors"/>
    <property type="match status" value="1"/>
</dbReference>
<dbReference type="HAMAP" id="MF_01325_B">
    <property type="entry name" value="Ribosomal_uL3_B"/>
    <property type="match status" value="1"/>
</dbReference>
<dbReference type="InterPro" id="IPR000597">
    <property type="entry name" value="Ribosomal_uL3"/>
</dbReference>
<dbReference type="InterPro" id="IPR019927">
    <property type="entry name" value="Ribosomal_uL3_bac/org-type"/>
</dbReference>
<dbReference type="InterPro" id="IPR019926">
    <property type="entry name" value="Ribosomal_uL3_CS"/>
</dbReference>
<dbReference type="InterPro" id="IPR009000">
    <property type="entry name" value="Transl_B-barrel_sf"/>
</dbReference>
<dbReference type="NCBIfam" id="TIGR03625">
    <property type="entry name" value="L3_bact"/>
    <property type="match status" value="1"/>
</dbReference>
<dbReference type="PANTHER" id="PTHR11229">
    <property type="entry name" value="50S RIBOSOMAL PROTEIN L3"/>
    <property type="match status" value="1"/>
</dbReference>
<dbReference type="PANTHER" id="PTHR11229:SF16">
    <property type="entry name" value="LARGE RIBOSOMAL SUBUNIT PROTEIN UL3C"/>
    <property type="match status" value="1"/>
</dbReference>
<dbReference type="Pfam" id="PF00297">
    <property type="entry name" value="Ribosomal_L3"/>
    <property type="match status" value="1"/>
</dbReference>
<dbReference type="SUPFAM" id="SSF50447">
    <property type="entry name" value="Translation proteins"/>
    <property type="match status" value="1"/>
</dbReference>
<dbReference type="PROSITE" id="PS00474">
    <property type="entry name" value="RIBOSOMAL_L3"/>
    <property type="match status" value="1"/>
</dbReference>
<reference key="1">
    <citation type="journal article" date="2013" name="Stand. Genomic Sci.">
        <title>Complete genome sequence of Arthrobacter sp. strain FB24.</title>
        <authorList>
            <person name="Nakatsu C.H."/>
            <person name="Barabote R."/>
            <person name="Thompson S."/>
            <person name="Bruce D."/>
            <person name="Detter C."/>
            <person name="Brettin T."/>
            <person name="Han C."/>
            <person name="Beasley F."/>
            <person name="Chen W."/>
            <person name="Konopka A."/>
            <person name="Xie G."/>
        </authorList>
    </citation>
    <scope>NUCLEOTIDE SEQUENCE [LARGE SCALE GENOMIC DNA]</scope>
    <source>
        <strain>FB24</strain>
    </source>
</reference>
<sequence length="216" mass="22928">MTATRNVKGLLGTKLGMTQVWDENNKLIPVTVVQADSNVITQLRNADVDGYVAVQIGYGQIDPRKVTKPLAGHFEKAGVTPRRHVVELRTADAAEYELGQELSVEVFEAGQKIDVVGTTKGKGFAGVMKRHGFHGVGASHGAHKNHRKPGSIGGASTPSRVFKGMKMAGRMGAVRHTTLNLTVHAVDVEKSLLLIKGAVPGARGQVVLVRTAVKGA</sequence>
<keyword id="KW-1185">Reference proteome</keyword>
<keyword id="KW-0687">Ribonucleoprotein</keyword>
<keyword id="KW-0689">Ribosomal protein</keyword>
<keyword id="KW-0694">RNA-binding</keyword>
<keyword id="KW-0699">rRNA-binding</keyword>
<proteinExistence type="inferred from homology"/>
<feature type="chain" id="PRO_1000073248" description="Large ribosomal subunit protein uL3">
    <location>
        <begin position="1"/>
        <end position="216"/>
    </location>
</feature>
<feature type="region of interest" description="Disordered" evidence="2">
    <location>
        <begin position="137"/>
        <end position="158"/>
    </location>
</feature>
<organism>
    <name type="scientific">Arthrobacter sp. (strain FB24)</name>
    <dbReference type="NCBI Taxonomy" id="290399"/>
    <lineage>
        <taxon>Bacteria</taxon>
        <taxon>Bacillati</taxon>
        <taxon>Actinomycetota</taxon>
        <taxon>Actinomycetes</taxon>
        <taxon>Micrococcales</taxon>
        <taxon>Micrococcaceae</taxon>
        <taxon>Arthrobacter</taxon>
    </lineage>
</organism>
<protein>
    <recommendedName>
        <fullName evidence="1">Large ribosomal subunit protein uL3</fullName>
    </recommendedName>
    <alternativeName>
        <fullName evidence="3">50S ribosomal protein L3</fullName>
    </alternativeName>
</protein>
<evidence type="ECO:0000255" key="1">
    <source>
        <dbReference type="HAMAP-Rule" id="MF_01325"/>
    </source>
</evidence>
<evidence type="ECO:0000256" key="2">
    <source>
        <dbReference type="SAM" id="MobiDB-lite"/>
    </source>
</evidence>
<evidence type="ECO:0000305" key="3"/>